<comment type="function">
    <text evidence="1 2">Negatively regulates the androgen receptor by recruiting histone deacetylase complex, and protein DJ-1 antagonizes this inhibition by abrogation of this complex. Microtubule inner protein (MIP) part of the dynein-decorated doublet microtubules (DMTs) in cilia axoneme, which is required for motile cilia beating.</text>
</comment>
<comment type="subunit">
    <text evidence="1 2">Microtubule inner protein component of sperm flagellar doublet microtubules (By similarity). Binds PARK7. Part of a ternary complex containing PARK7, EFCAB6/DJBP and AR (By similarity).</text>
</comment>
<comment type="subcellular location">
    <subcellularLocation>
        <location evidence="1">Nucleus</location>
    </subcellularLocation>
    <subcellularLocation>
        <location evidence="2">Cytoplasm</location>
        <location evidence="2">Cytoskeleton</location>
        <location evidence="2">Flagellum axoneme</location>
    </subcellularLocation>
</comment>
<gene>
    <name type="primary">EFCAB6</name>
    <name type="synonym">DJBP</name>
</gene>
<keyword id="KW-0106">Calcium</keyword>
<keyword id="KW-0966">Cell projection</keyword>
<keyword id="KW-0969">Cilium</keyword>
<keyword id="KW-0963">Cytoplasm</keyword>
<keyword id="KW-0206">Cytoskeleton</keyword>
<keyword id="KW-0282">Flagellum</keyword>
<keyword id="KW-0479">Metal-binding</keyword>
<keyword id="KW-0539">Nucleus</keyword>
<keyword id="KW-0597">Phosphoprotein</keyword>
<keyword id="KW-1185">Reference proteome</keyword>
<keyword id="KW-0677">Repeat</keyword>
<keyword id="KW-0678">Repressor</keyword>
<keyword id="KW-0804">Transcription</keyword>
<keyword id="KW-0805">Transcription regulation</keyword>
<feature type="chain" id="PRO_0000246027" description="EF-hand calcium-binding domain-containing protein 6">
    <location>
        <begin position="1"/>
        <end position="1013"/>
    </location>
</feature>
<feature type="domain" description="EF-hand 1" evidence="3">
    <location>
        <begin position="20"/>
        <end position="55"/>
    </location>
</feature>
<feature type="domain" description="EF-hand 2" evidence="3">
    <location>
        <begin position="145"/>
        <end position="180"/>
    </location>
</feature>
<feature type="domain" description="EF-hand 3" evidence="3">
    <location>
        <begin position="251"/>
        <end position="286"/>
    </location>
</feature>
<feature type="domain" description="EF-hand 4" evidence="3">
    <location>
        <begin position="287"/>
        <end position="322"/>
    </location>
</feature>
<feature type="domain" description="EF-hand 5" evidence="3">
    <location>
        <begin position="352"/>
        <end position="387"/>
    </location>
</feature>
<feature type="domain" description="EF-hand 6" evidence="3">
    <location>
        <begin position="482"/>
        <end position="517"/>
    </location>
</feature>
<feature type="domain" description="EF-hand 7" evidence="3">
    <location>
        <begin position="589"/>
        <end position="624"/>
    </location>
</feature>
<feature type="domain" description="EF-hand 8" evidence="3">
    <location>
        <begin position="695"/>
        <end position="730"/>
    </location>
</feature>
<feature type="domain" description="EF-hand 9" evidence="3">
    <location>
        <begin position="731"/>
        <end position="766"/>
    </location>
</feature>
<feature type="domain" description="EF-hand 10" evidence="3">
    <location>
        <begin position="812"/>
        <end position="847"/>
    </location>
</feature>
<feature type="domain" description="EF-hand 11" evidence="3">
    <location>
        <begin position="917"/>
        <end position="952"/>
    </location>
</feature>
<feature type="region of interest" description="Disordered" evidence="4">
    <location>
        <begin position="441"/>
        <end position="460"/>
    </location>
</feature>
<feature type="binding site" evidence="3">
    <location>
        <position position="602"/>
    </location>
    <ligand>
        <name>Ca(2+)</name>
        <dbReference type="ChEBI" id="CHEBI:29108"/>
    </ligand>
</feature>
<feature type="binding site" evidence="3">
    <location>
        <position position="604"/>
    </location>
    <ligand>
        <name>Ca(2+)</name>
        <dbReference type="ChEBI" id="CHEBI:29108"/>
    </ligand>
</feature>
<feature type="binding site" evidence="3">
    <location>
        <position position="606"/>
    </location>
    <ligand>
        <name>Ca(2+)</name>
        <dbReference type="ChEBI" id="CHEBI:29108"/>
    </ligand>
</feature>
<feature type="binding site" evidence="3">
    <location>
        <position position="613"/>
    </location>
    <ligand>
        <name>Ca(2+)</name>
        <dbReference type="ChEBI" id="CHEBI:29108"/>
    </ligand>
</feature>
<feature type="modified residue" description="Phosphothreonine" evidence="2">
    <location>
        <position position="732"/>
    </location>
</feature>
<reference key="1">
    <citation type="submission" date="2004-11" db="EMBL/GenBank/DDBJ databases">
        <authorList>
            <consortium name="The German cDNA consortium"/>
        </authorList>
    </citation>
    <scope>NUCLEOTIDE SEQUENCE [LARGE SCALE MRNA]</scope>
    <source>
        <tissue>Kidney</tissue>
    </source>
</reference>
<proteinExistence type="inferred from homology"/>
<evidence type="ECO:0000250" key="1">
    <source>
        <dbReference type="UniProtKB" id="Q5THR3"/>
    </source>
</evidence>
<evidence type="ECO:0000250" key="2">
    <source>
        <dbReference type="UniProtKB" id="Q6P1E8"/>
    </source>
</evidence>
<evidence type="ECO:0000255" key="3">
    <source>
        <dbReference type="PROSITE-ProRule" id="PRU00448"/>
    </source>
</evidence>
<evidence type="ECO:0000256" key="4">
    <source>
        <dbReference type="SAM" id="MobiDB-lite"/>
    </source>
</evidence>
<accession>Q5RE62</accession>
<dbReference type="EMBL" id="CR857675">
    <property type="protein sequence ID" value="CAH89945.1"/>
    <property type="molecule type" value="Transcribed_RNA"/>
</dbReference>
<dbReference type="SMR" id="Q5RE62"/>
<dbReference type="STRING" id="9601.ENSPPYP00000013297"/>
<dbReference type="eggNOG" id="KOG0027">
    <property type="taxonomic scope" value="Eukaryota"/>
</dbReference>
<dbReference type="InParanoid" id="Q5RE62"/>
<dbReference type="Proteomes" id="UP000001595">
    <property type="component" value="Unplaced"/>
</dbReference>
<dbReference type="GO" id="GO:0005737">
    <property type="term" value="C:cytoplasm"/>
    <property type="evidence" value="ECO:0007669"/>
    <property type="project" value="UniProtKB-KW"/>
</dbReference>
<dbReference type="GO" id="GO:0005856">
    <property type="term" value="C:cytoskeleton"/>
    <property type="evidence" value="ECO:0007669"/>
    <property type="project" value="UniProtKB-KW"/>
</dbReference>
<dbReference type="GO" id="GO:0005654">
    <property type="term" value="C:nucleoplasm"/>
    <property type="evidence" value="ECO:0007669"/>
    <property type="project" value="TreeGrafter"/>
</dbReference>
<dbReference type="GO" id="GO:0036126">
    <property type="term" value="C:sperm flagellum"/>
    <property type="evidence" value="ECO:0000250"/>
    <property type="project" value="UniProtKB"/>
</dbReference>
<dbReference type="GO" id="GO:0005509">
    <property type="term" value="F:calcium ion binding"/>
    <property type="evidence" value="ECO:0007669"/>
    <property type="project" value="InterPro"/>
</dbReference>
<dbReference type="GO" id="GO:0030317">
    <property type="term" value="P:flagellated sperm motility"/>
    <property type="evidence" value="ECO:0000250"/>
    <property type="project" value="UniProtKB"/>
</dbReference>
<dbReference type="FunFam" id="1.10.238.10:FF:000325">
    <property type="entry name" value="EF-hand calcium binding domain 6"/>
    <property type="match status" value="1"/>
</dbReference>
<dbReference type="FunFam" id="1.10.238.10:FF:000342">
    <property type="entry name" value="EF-hand calcium binding domain 6"/>
    <property type="match status" value="1"/>
</dbReference>
<dbReference type="FunFam" id="1.10.238.10:FF:000492">
    <property type="entry name" value="EF-hand calcium binding domain 6"/>
    <property type="match status" value="1"/>
</dbReference>
<dbReference type="FunFam" id="1.10.238.10:FF:000121">
    <property type="entry name" value="EF-hand calcium-binding domain-containing protein 6"/>
    <property type="match status" value="2"/>
</dbReference>
<dbReference type="FunFam" id="1.10.238.10:FF:000240">
    <property type="entry name" value="EF-hand calcium-binding domain-containing protein 6"/>
    <property type="match status" value="1"/>
</dbReference>
<dbReference type="Gene3D" id="1.10.238.10">
    <property type="entry name" value="EF-hand"/>
    <property type="match status" value="7"/>
</dbReference>
<dbReference type="InterPro" id="IPR011992">
    <property type="entry name" value="EF-hand-dom_pair"/>
</dbReference>
<dbReference type="InterPro" id="IPR018247">
    <property type="entry name" value="EF_Hand_1_Ca_BS"/>
</dbReference>
<dbReference type="InterPro" id="IPR002048">
    <property type="entry name" value="EF_hand_dom"/>
</dbReference>
<dbReference type="InterPro" id="IPR052603">
    <property type="entry name" value="EFCB6"/>
</dbReference>
<dbReference type="PANTHER" id="PTHR20875:SF2">
    <property type="entry name" value="EF-HAND CALCIUM-BINDING DOMAIN-CONTAINING PROTEIN 6"/>
    <property type="match status" value="1"/>
</dbReference>
<dbReference type="PANTHER" id="PTHR20875">
    <property type="entry name" value="EF-HAND CALCIUM-BINDING DOMAIN-CONTAINING PROTEIN 6-RELATED"/>
    <property type="match status" value="1"/>
</dbReference>
<dbReference type="Pfam" id="PF13833">
    <property type="entry name" value="EF-hand_8"/>
    <property type="match status" value="1"/>
</dbReference>
<dbReference type="SMART" id="SM00054">
    <property type="entry name" value="EFh"/>
    <property type="match status" value="9"/>
</dbReference>
<dbReference type="SUPFAM" id="SSF47473">
    <property type="entry name" value="EF-hand"/>
    <property type="match status" value="5"/>
</dbReference>
<dbReference type="PROSITE" id="PS00018">
    <property type="entry name" value="EF_HAND_1"/>
    <property type="match status" value="1"/>
</dbReference>
<dbReference type="PROSITE" id="PS50222">
    <property type="entry name" value="EF_HAND_2"/>
    <property type="match status" value="11"/>
</dbReference>
<organism>
    <name type="scientific">Pongo abelii</name>
    <name type="common">Sumatran orangutan</name>
    <name type="synonym">Pongo pygmaeus abelii</name>
    <dbReference type="NCBI Taxonomy" id="9601"/>
    <lineage>
        <taxon>Eukaryota</taxon>
        <taxon>Metazoa</taxon>
        <taxon>Chordata</taxon>
        <taxon>Craniata</taxon>
        <taxon>Vertebrata</taxon>
        <taxon>Euteleostomi</taxon>
        <taxon>Mammalia</taxon>
        <taxon>Eutheria</taxon>
        <taxon>Euarchontoglires</taxon>
        <taxon>Primates</taxon>
        <taxon>Haplorrhini</taxon>
        <taxon>Catarrhini</taxon>
        <taxon>Hominidae</taxon>
        <taxon>Pongo</taxon>
    </lineage>
</organism>
<protein>
    <recommendedName>
        <fullName>EF-hand calcium-binding domain-containing protein 6</fullName>
    </recommendedName>
    <alternativeName>
        <fullName>DJ-1-binding protein</fullName>
        <shortName>DJBP</shortName>
    </alternativeName>
</protein>
<name>EFCB6_PONAB</name>
<sequence length="1013" mass="117761">MNCCRTLRELEIQVGEKVFKNIKTVMKAFKLIDVNKTGLVRPQELRRVLETFCLKLRDEEYEKFSKHYNIHNDTAVDYNVFLKNLSINNDLNLRYCMGNQEVSLENQQARNSKKERLLGSASSEDIWRNYSLDDIERNFCLELSKSYEKIEKALSAGDPCKGGYVSFNYLKIVLDTFIYQIPRRIFIQLMKRFGLKATTKINWKQFLTSFHEPQGLQVSNKGPLTKRNSINSRSESRKENIITKLFRCTEDRSASLKKALLIINTKPDGPITREEFRYILNCVAIKLSDSEFKELMQILDPGDTGVVNTSMFIDLIEENCRMRKTSPCTDAKTPFLLAWDSVEEIVHDTIARNLQAFYNMLRSYDLGDTGLIGRNNFKKIMHVFCPFLTNAHFIKLCSKIQDIGSGRILYKKLLACIGIDGPPTVSPVLVPKDQLLSEHLQKDEQQQPDLSERTKPTEDKTTLTKKMTTEEVIEKFRKYIQQQDPAFKKRFLDFSKEPNGKINVHDFRKILEDTGMPMDDDQYALLTTKIGFEKEGMSYLDFAAGFEDPPMRGLETTPPQPPTPSKSYVNSHLITAEECLKLFPRRLKESFRDPYSAFFKTDVDRDGIINMHDLHRLLLHLLLNLKDDEFERFLGLLGLRLSVTLNFREFQNLCEKRPWRTDEAPQRLIRPKQKVADSELACEQAHQYLVTKAKNRWSDLSKNFLETDNEGNGILRRRDIKNALYGFDIPLTPREFEKLWARYNTEGKGHITYQEFLQKLGINYSPAVHQPCAEDYFNFMGHFTKPQQLQEEMKELQQSTEKAMAARDKLMDLHQDISKAFTKIDKSKTNYISICKMQKVLEECGCSLTEGELTHLLNSWGVSRHENAINYLDFLRAVENSKSTGAQPKEKEESMPISFATLNPQEVVRKIQEVVESSQLALSTAFSALDKEDTGFVKATEFGQVLKDFCYKLMDNQYHYFLRKLRIHLTPYINWKYFLQNFSCFLEEVRISAAHKHLFENELKLVFTKWIID</sequence>